<accession>B6EPQ0</accession>
<proteinExistence type="inferred from homology"/>
<reference key="1">
    <citation type="journal article" date="2008" name="BMC Genomics">
        <title>The genome sequence of the fish pathogen Aliivibrio salmonicida strain LFI1238 shows extensive evidence of gene decay.</title>
        <authorList>
            <person name="Hjerde E."/>
            <person name="Lorentzen M.S."/>
            <person name="Holden M.T."/>
            <person name="Seeger K."/>
            <person name="Paulsen S."/>
            <person name="Bason N."/>
            <person name="Churcher C."/>
            <person name="Harris D."/>
            <person name="Norbertczak H."/>
            <person name="Quail M.A."/>
            <person name="Sanders S."/>
            <person name="Thurston S."/>
            <person name="Parkhill J."/>
            <person name="Willassen N.P."/>
            <person name="Thomson N.R."/>
        </authorList>
    </citation>
    <scope>NUCLEOTIDE SEQUENCE [LARGE SCALE GENOMIC DNA]</scope>
    <source>
        <strain>LFI1238</strain>
    </source>
</reference>
<dbReference type="EC" id="3.1.1.85" evidence="2"/>
<dbReference type="EMBL" id="FM178379">
    <property type="protein sequence ID" value="CAQ77884.1"/>
    <property type="molecule type" value="Genomic_DNA"/>
</dbReference>
<dbReference type="RefSeq" id="WP_012549077.1">
    <property type="nucleotide sequence ID" value="NC_011312.1"/>
</dbReference>
<dbReference type="SMR" id="B6EPQ0"/>
<dbReference type="ESTHER" id="alisl-bioh">
    <property type="family name" value="BioH"/>
</dbReference>
<dbReference type="KEGG" id="vsa:VSAL_I0199"/>
<dbReference type="eggNOG" id="COG2267">
    <property type="taxonomic scope" value="Bacteria"/>
</dbReference>
<dbReference type="HOGENOM" id="CLU_020336_12_2_6"/>
<dbReference type="UniPathway" id="UPA00078"/>
<dbReference type="Proteomes" id="UP000001730">
    <property type="component" value="Chromosome 1"/>
</dbReference>
<dbReference type="GO" id="GO:0005737">
    <property type="term" value="C:cytoplasm"/>
    <property type="evidence" value="ECO:0007669"/>
    <property type="project" value="UniProtKB-SubCell"/>
</dbReference>
<dbReference type="GO" id="GO:0090499">
    <property type="term" value="F:pimelyl-[acyl-carrier protein] methyl ester esterase activity"/>
    <property type="evidence" value="ECO:0007669"/>
    <property type="project" value="UniProtKB-EC"/>
</dbReference>
<dbReference type="GO" id="GO:0009102">
    <property type="term" value="P:biotin biosynthetic process"/>
    <property type="evidence" value="ECO:0007669"/>
    <property type="project" value="UniProtKB-UniRule"/>
</dbReference>
<dbReference type="Gene3D" id="3.40.50.1820">
    <property type="entry name" value="alpha/beta hydrolase"/>
    <property type="match status" value="1"/>
</dbReference>
<dbReference type="HAMAP" id="MF_01260">
    <property type="entry name" value="Carboxylester"/>
    <property type="match status" value="1"/>
</dbReference>
<dbReference type="InterPro" id="IPR000073">
    <property type="entry name" value="AB_hydrolase_1"/>
</dbReference>
<dbReference type="InterPro" id="IPR029058">
    <property type="entry name" value="AB_hydrolase_fold"/>
</dbReference>
<dbReference type="InterPro" id="IPR010076">
    <property type="entry name" value="BioH"/>
</dbReference>
<dbReference type="InterPro" id="IPR050228">
    <property type="entry name" value="Carboxylesterase_BioH"/>
</dbReference>
<dbReference type="NCBIfam" id="TIGR01738">
    <property type="entry name" value="bioH"/>
    <property type="match status" value="1"/>
</dbReference>
<dbReference type="PANTHER" id="PTHR43194">
    <property type="entry name" value="HYDROLASE ALPHA/BETA FOLD FAMILY"/>
    <property type="match status" value="1"/>
</dbReference>
<dbReference type="PANTHER" id="PTHR43194:SF5">
    <property type="entry name" value="PIMELOYL-[ACYL-CARRIER PROTEIN] METHYL ESTER ESTERASE"/>
    <property type="match status" value="1"/>
</dbReference>
<dbReference type="Pfam" id="PF00561">
    <property type="entry name" value="Abhydrolase_1"/>
    <property type="match status" value="1"/>
</dbReference>
<dbReference type="SUPFAM" id="SSF53474">
    <property type="entry name" value="alpha/beta-Hydrolases"/>
    <property type="match status" value="1"/>
</dbReference>
<sequence length="261" mass="28749">MTTSLYWQTEGEGSDLVLIHGWGMNGAVWQPIVEKLSSQYRVHTVDLSGYGYSAELGSADFDEMVAQVLAQAPEKSAWLGWSLGGLIATQAALTAPDRVSQLITVASSPRFAAEKGWRGIKSAVLSQFTEQLKEDFTLTVERFMTLQAMGSPNAKQDIKQVKRAVLSRPAPNPSALATGLTILADIDLRESLSQLTMPVCRMYGRLDGLVPIKVAHDMDAFIPHSTKVVFEQASHAPFISHSDEFITELHRFLQPEDEFLI</sequence>
<gene>
    <name evidence="2" type="primary">bioH</name>
    <name type="ordered locus">VSAL_I0199</name>
</gene>
<feature type="chain" id="PRO_1000139985" description="Pimeloyl-[acyl-carrier protein] methyl ester esterase">
    <location>
        <begin position="1"/>
        <end position="261"/>
    </location>
</feature>
<feature type="domain" description="AB hydrolase-1" evidence="1">
    <location>
        <begin position="16"/>
        <end position="241"/>
    </location>
</feature>
<feature type="active site" description="Nucleophile" evidence="2">
    <location>
        <position position="82"/>
    </location>
</feature>
<feature type="active site" evidence="2">
    <location>
        <position position="207"/>
    </location>
</feature>
<feature type="active site" evidence="2">
    <location>
        <position position="235"/>
    </location>
</feature>
<feature type="binding site" evidence="2">
    <location>
        <position position="22"/>
    </location>
    <ligand>
        <name>substrate</name>
    </ligand>
</feature>
<feature type="binding site" evidence="2">
    <location>
        <begin position="82"/>
        <end position="83"/>
    </location>
    <ligand>
        <name>substrate</name>
    </ligand>
</feature>
<feature type="binding site" evidence="2">
    <location>
        <begin position="143"/>
        <end position="147"/>
    </location>
    <ligand>
        <name>substrate</name>
    </ligand>
</feature>
<feature type="binding site" evidence="2">
    <location>
        <position position="235"/>
    </location>
    <ligand>
        <name>substrate</name>
    </ligand>
</feature>
<protein>
    <recommendedName>
        <fullName evidence="2">Pimeloyl-[acyl-carrier protein] methyl ester esterase</fullName>
        <ecNumber evidence="2">3.1.1.85</ecNumber>
    </recommendedName>
    <alternativeName>
        <fullName evidence="2">Biotin synthesis protein BioH</fullName>
    </alternativeName>
    <alternativeName>
        <fullName evidence="2">Carboxylesterase BioH</fullName>
    </alternativeName>
</protein>
<keyword id="KW-0093">Biotin biosynthesis</keyword>
<keyword id="KW-0963">Cytoplasm</keyword>
<keyword id="KW-0378">Hydrolase</keyword>
<keyword id="KW-0719">Serine esterase</keyword>
<name>BIOH_ALISL</name>
<organism>
    <name type="scientific">Aliivibrio salmonicida (strain LFI1238)</name>
    <name type="common">Vibrio salmonicida (strain LFI1238)</name>
    <dbReference type="NCBI Taxonomy" id="316275"/>
    <lineage>
        <taxon>Bacteria</taxon>
        <taxon>Pseudomonadati</taxon>
        <taxon>Pseudomonadota</taxon>
        <taxon>Gammaproteobacteria</taxon>
        <taxon>Vibrionales</taxon>
        <taxon>Vibrionaceae</taxon>
        <taxon>Aliivibrio</taxon>
    </lineage>
</organism>
<comment type="function">
    <text evidence="2">The physiological role of BioH is to remove the methyl group introduced by BioC when the pimeloyl moiety is complete. It allows to synthesize pimeloyl-ACP via the fatty acid synthetic pathway through the hydrolysis of the ester bonds of pimeloyl-ACP esters.</text>
</comment>
<comment type="catalytic activity">
    <reaction evidence="2">
        <text>6-carboxyhexanoyl-[ACP] methyl ester + H2O = 6-carboxyhexanoyl-[ACP] + methanol + H(+)</text>
        <dbReference type="Rhea" id="RHEA:42700"/>
        <dbReference type="Rhea" id="RHEA-COMP:9955"/>
        <dbReference type="Rhea" id="RHEA-COMP:10186"/>
        <dbReference type="ChEBI" id="CHEBI:15377"/>
        <dbReference type="ChEBI" id="CHEBI:15378"/>
        <dbReference type="ChEBI" id="CHEBI:17790"/>
        <dbReference type="ChEBI" id="CHEBI:78846"/>
        <dbReference type="ChEBI" id="CHEBI:82735"/>
        <dbReference type="EC" id="3.1.1.85"/>
    </reaction>
</comment>
<comment type="pathway">
    <text evidence="2">Cofactor biosynthesis; biotin biosynthesis.</text>
</comment>
<comment type="subunit">
    <text evidence="2">Monomer.</text>
</comment>
<comment type="subcellular location">
    <subcellularLocation>
        <location evidence="2">Cytoplasm</location>
    </subcellularLocation>
</comment>
<comment type="similarity">
    <text evidence="2">Belongs to the AB hydrolase superfamily. Carboxylesterase BioH family.</text>
</comment>
<evidence type="ECO:0000255" key="1"/>
<evidence type="ECO:0000255" key="2">
    <source>
        <dbReference type="HAMAP-Rule" id="MF_01260"/>
    </source>
</evidence>